<feature type="chain" id="PRO_0000442971" description="Probable chaperonin-like protein PrmG">
    <location>
        <begin position="1"/>
        <end position="549"/>
    </location>
</feature>
<keyword id="KW-0143">Chaperone</keyword>
<dbReference type="EMBL" id="CP000431">
    <property type="protein sequence ID" value="ABG92284.1"/>
    <property type="molecule type" value="Genomic_DNA"/>
</dbReference>
<dbReference type="RefSeq" id="WP_005242375.1">
    <property type="nucleotide sequence ID" value="NC_008268.1"/>
</dbReference>
<dbReference type="SMR" id="Q0SJK2"/>
<dbReference type="GeneID" id="69892174"/>
<dbReference type="KEGG" id="rha:RHA1_ro00448"/>
<dbReference type="PATRIC" id="fig|101510.16.peg.476"/>
<dbReference type="eggNOG" id="COG0459">
    <property type="taxonomic scope" value="Bacteria"/>
</dbReference>
<dbReference type="HOGENOM" id="CLU_016503_3_0_11"/>
<dbReference type="OrthoDB" id="9766614at2"/>
<dbReference type="Proteomes" id="UP000008710">
    <property type="component" value="Chromosome"/>
</dbReference>
<dbReference type="GO" id="GO:0005524">
    <property type="term" value="F:ATP binding"/>
    <property type="evidence" value="ECO:0007669"/>
    <property type="project" value="InterPro"/>
</dbReference>
<dbReference type="GO" id="GO:0140662">
    <property type="term" value="F:ATP-dependent protein folding chaperone"/>
    <property type="evidence" value="ECO:0007669"/>
    <property type="project" value="InterPro"/>
</dbReference>
<dbReference type="GO" id="GO:0042026">
    <property type="term" value="P:protein refolding"/>
    <property type="evidence" value="ECO:0007669"/>
    <property type="project" value="InterPro"/>
</dbReference>
<dbReference type="CDD" id="cd03344">
    <property type="entry name" value="GroEL"/>
    <property type="match status" value="1"/>
</dbReference>
<dbReference type="FunFam" id="3.50.7.10:FF:000001">
    <property type="entry name" value="60 kDa chaperonin"/>
    <property type="match status" value="1"/>
</dbReference>
<dbReference type="Gene3D" id="3.50.7.10">
    <property type="entry name" value="GroEL"/>
    <property type="match status" value="1"/>
</dbReference>
<dbReference type="Gene3D" id="1.10.560.10">
    <property type="entry name" value="GroEL-like equatorial domain"/>
    <property type="match status" value="1"/>
</dbReference>
<dbReference type="Gene3D" id="3.30.260.10">
    <property type="entry name" value="TCP-1-like chaperonin intermediate domain"/>
    <property type="match status" value="1"/>
</dbReference>
<dbReference type="InterPro" id="IPR001844">
    <property type="entry name" value="Cpn60/GroEL"/>
</dbReference>
<dbReference type="InterPro" id="IPR002423">
    <property type="entry name" value="Cpn60/GroEL/TCP-1"/>
</dbReference>
<dbReference type="InterPro" id="IPR027409">
    <property type="entry name" value="GroEL-like_apical_dom_sf"/>
</dbReference>
<dbReference type="InterPro" id="IPR027413">
    <property type="entry name" value="GROEL-like_equatorial_sf"/>
</dbReference>
<dbReference type="InterPro" id="IPR027410">
    <property type="entry name" value="TCP-1-like_intermed_sf"/>
</dbReference>
<dbReference type="NCBIfam" id="TIGR02348">
    <property type="entry name" value="GroEL"/>
    <property type="match status" value="1"/>
</dbReference>
<dbReference type="NCBIfam" id="NF000592">
    <property type="entry name" value="PRK00013.1"/>
    <property type="match status" value="1"/>
</dbReference>
<dbReference type="NCBIfam" id="NF009487">
    <property type="entry name" value="PRK12849.1"/>
    <property type="match status" value="1"/>
</dbReference>
<dbReference type="NCBIfam" id="NF009488">
    <property type="entry name" value="PRK12850.1"/>
    <property type="match status" value="1"/>
</dbReference>
<dbReference type="NCBIfam" id="NF009489">
    <property type="entry name" value="PRK12851.1"/>
    <property type="match status" value="1"/>
</dbReference>
<dbReference type="PANTHER" id="PTHR45633">
    <property type="entry name" value="60 KDA HEAT SHOCK PROTEIN, MITOCHONDRIAL"/>
    <property type="match status" value="1"/>
</dbReference>
<dbReference type="Pfam" id="PF00118">
    <property type="entry name" value="Cpn60_TCP1"/>
    <property type="match status" value="1"/>
</dbReference>
<dbReference type="PRINTS" id="PR00298">
    <property type="entry name" value="CHAPERONIN60"/>
</dbReference>
<dbReference type="SUPFAM" id="SSF52029">
    <property type="entry name" value="GroEL apical domain-like"/>
    <property type="match status" value="1"/>
</dbReference>
<dbReference type="SUPFAM" id="SSF48592">
    <property type="entry name" value="GroEL equatorial domain-like"/>
    <property type="match status" value="1"/>
</dbReference>
<dbReference type="SUPFAM" id="SSF54849">
    <property type="entry name" value="GroEL-intermediate domain like"/>
    <property type="match status" value="1"/>
</dbReference>
<sequence length="549" mass="58079">MAKELRYNTDARARLEHGVNALADAVKVTLGPKGRNAVLEKLTGPPTITNDGVTIAREIQLREPFANMGAQLVKEVAMKTNGVVGDGTTTATVLAQAMVREGLRSVDAGANPMRVRRGIERAVSVVVDSLHEQASQIGGQSDLQRIATLAASDDEVIGHAISKAVDYVGKSGVVTTEESDTLGLSVDIVDGIEFDHGYISGYMVTDPERMEAVHTNPLILLTNKKITQVQDIMPSIEVAKRADRPLVVLAEEVDGPALQLLVGGNMHKTMQSVVVRAPGFGHRRVAELEDLAVALGGHVIAKDTGIELSEISVEHLGSCDRITVTENETTIVGGHGDQRLLDARIAQLESQHERAKIEADQESLELRIARLTGRVAVIRVGGATSVELKERMLRVEDALAATRAAVEAGIVSGGGTALAQSHRALADLDLTGDEAIGCDVVRRALAEPLRWIAINAGFDGDEVVEVVAGLPLGHGFNALTGEYGDMFDDGVIDPFKVTRAALESAASIAALLITTETAVVEEVLGNPGAIMAPGFGDLAEGMVRPSNIY</sequence>
<gene>
    <name type="primary">prmG</name>
    <name evidence="4" type="synonym">groL1</name>
    <name evidence="4" type="ordered locus">RHA1_ro00448</name>
</gene>
<comment type="function">
    <text evidence="3">Probably plays an essential role in the productive folding of PrmA, and thus in the formation of the active PrmABCD complex.</text>
</comment>
<comment type="similarity">
    <text evidence="2">Belongs to the chaperonin (HSP60) family.</text>
</comment>
<name>PRMG_RHOJR</name>
<evidence type="ECO:0000303" key="1">
    <source>
    </source>
</evidence>
<evidence type="ECO:0000305" key="2"/>
<evidence type="ECO:0000305" key="3">
    <source>
    </source>
</evidence>
<evidence type="ECO:0000312" key="4">
    <source>
        <dbReference type="EMBL" id="ABG92284.1"/>
    </source>
</evidence>
<evidence type="ECO:0000312" key="5">
    <source>
        <dbReference type="Proteomes" id="UP000008710"/>
    </source>
</evidence>
<accession>Q0SJK2</accession>
<protein>
    <recommendedName>
        <fullName evidence="1">Probable chaperonin-like protein PrmG</fullName>
    </recommendedName>
</protein>
<proteinExistence type="inferred from homology"/>
<organism>
    <name type="scientific">Rhodococcus jostii (strain RHA1)</name>
    <dbReference type="NCBI Taxonomy" id="101510"/>
    <lineage>
        <taxon>Bacteria</taxon>
        <taxon>Bacillati</taxon>
        <taxon>Actinomycetota</taxon>
        <taxon>Actinomycetes</taxon>
        <taxon>Mycobacteriales</taxon>
        <taxon>Nocardiaceae</taxon>
        <taxon>Rhodococcus</taxon>
    </lineage>
</organism>
<reference key="1">
    <citation type="journal article" date="2006" name="Proc. Natl. Acad. Sci. U.S.A.">
        <title>The complete genome of Rhodococcus sp. RHA1 provides insights into a catabolic powerhouse.</title>
        <authorList>
            <person name="McLeod M.P."/>
            <person name="Warren R.L."/>
            <person name="Hsiao W.W.L."/>
            <person name="Araki N."/>
            <person name="Myhre M."/>
            <person name="Fernandes C."/>
            <person name="Miyazawa D."/>
            <person name="Wong W."/>
            <person name="Lillquist A.L."/>
            <person name="Wang D."/>
            <person name="Dosanjh M."/>
            <person name="Hara H."/>
            <person name="Petrescu A."/>
            <person name="Morin R.D."/>
            <person name="Yang G."/>
            <person name="Stott J.M."/>
            <person name="Schein J.E."/>
            <person name="Shin H."/>
            <person name="Smailus D."/>
            <person name="Siddiqui A.S."/>
            <person name="Marra M.A."/>
            <person name="Jones S.J.M."/>
            <person name="Holt R."/>
            <person name="Brinkman F.S.L."/>
            <person name="Miyauchi K."/>
            <person name="Fukuda M."/>
            <person name="Davies J.E."/>
            <person name="Mohn W.W."/>
            <person name="Eltis L.D."/>
        </authorList>
    </citation>
    <scope>NUCLEOTIDE SEQUENCE [LARGE SCALE GENOMIC DNA]</scope>
    <source>
        <strain evidence="5">RHA1</strain>
    </source>
</reference>
<reference key="2">
    <citation type="journal article" date="2013" name="FEBS J.">
        <title>The mycobacterial binuclear iron monooxygenases require a specific chaperonin-like protein for functional expression in a heterologous host.</title>
        <authorList>
            <person name="Furuya T."/>
            <person name="Hayashi M."/>
            <person name="Semba H."/>
            <person name="Kino K."/>
        </authorList>
    </citation>
    <scope>FUNCTION</scope>
</reference>